<keyword id="KW-0133">Cell shape</keyword>
<keyword id="KW-0961">Cell wall biogenesis/degradation</keyword>
<keyword id="KW-0413">Isomerase</keyword>
<keyword id="KW-0573">Peptidoglycan synthesis</keyword>
<keyword id="KW-1185">Reference proteome</keyword>
<evidence type="ECO:0000255" key="1">
    <source>
        <dbReference type="HAMAP-Rule" id="MF_00258"/>
    </source>
</evidence>
<reference key="1">
    <citation type="journal article" date="2008" name="Proc. Natl. Acad. Sci. U.S.A.">
        <title>Nitrogen fixation island and rhizosphere competence traits in the genome of root-associated Pseudomonas stutzeri A1501.</title>
        <authorList>
            <person name="Yan Y."/>
            <person name="Yang J."/>
            <person name="Dou Y."/>
            <person name="Chen M."/>
            <person name="Ping S."/>
            <person name="Peng J."/>
            <person name="Lu W."/>
            <person name="Zhang W."/>
            <person name="Yao Z."/>
            <person name="Li H."/>
            <person name="Liu W."/>
            <person name="He S."/>
            <person name="Geng L."/>
            <person name="Zhang X."/>
            <person name="Yang F."/>
            <person name="Yu H."/>
            <person name="Zhan Y."/>
            <person name="Li D."/>
            <person name="Lin Z."/>
            <person name="Wang Y."/>
            <person name="Elmerich C."/>
            <person name="Lin M."/>
            <person name="Jin Q."/>
        </authorList>
    </citation>
    <scope>NUCLEOTIDE SEQUENCE [LARGE SCALE GENOMIC DNA]</scope>
    <source>
        <strain>A1501</strain>
    </source>
</reference>
<protein>
    <recommendedName>
        <fullName evidence="1">Glutamate racemase</fullName>
        <ecNumber evidence="1">5.1.1.3</ecNumber>
    </recommendedName>
</protein>
<comment type="function">
    <text evidence="1">Provides the (R)-glutamate required for cell wall biosynthesis.</text>
</comment>
<comment type="catalytic activity">
    <reaction evidence="1">
        <text>L-glutamate = D-glutamate</text>
        <dbReference type="Rhea" id="RHEA:12813"/>
        <dbReference type="ChEBI" id="CHEBI:29985"/>
        <dbReference type="ChEBI" id="CHEBI:29986"/>
        <dbReference type="EC" id="5.1.1.3"/>
    </reaction>
</comment>
<comment type="pathway">
    <text evidence="1">Cell wall biogenesis; peptidoglycan biosynthesis.</text>
</comment>
<comment type="similarity">
    <text evidence="1">Belongs to the aspartate/glutamate racemases family.</text>
</comment>
<feature type="chain" id="PRO_1000059074" description="Glutamate racemase">
    <location>
        <begin position="1"/>
        <end position="264"/>
    </location>
</feature>
<feature type="active site" description="Proton donor/acceptor" evidence="1">
    <location>
        <position position="75"/>
    </location>
</feature>
<feature type="active site" description="Proton donor/acceptor" evidence="1">
    <location>
        <position position="186"/>
    </location>
</feature>
<feature type="binding site" evidence="1">
    <location>
        <begin position="12"/>
        <end position="13"/>
    </location>
    <ligand>
        <name>substrate</name>
    </ligand>
</feature>
<feature type="binding site" evidence="1">
    <location>
        <begin position="44"/>
        <end position="45"/>
    </location>
    <ligand>
        <name>substrate</name>
    </ligand>
</feature>
<feature type="binding site" evidence="1">
    <location>
        <begin position="76"/>
        <end position="77"/>
    </location>
    <ligand>
        <name>substrate</name>
    </ligand>
</feature>
<feature type="binding site" evidence="1">
    <location>
        <begin position="187"/>
        <end position="188"/>
    </location>
    <ligand>
        <name>substrate</name>
    </ligand>
</feature>
<accession>A4VPB6</accession>
<dbReference type="EC" id="5.1.1.3" evidence="1"/>
<dbReference type="EMBL" id="CP000304">
    <property type="protein sequence ID" value="ABP80817.1"/>
    <property type="molecule type" value="Genomic_DNA"/>
</dbReference>
<dbReference type="RefSeq" id="WP_011914262.1">
    <property type="nucleotide sequence ID" value="NC_009434.1"/>
</dbReference>
<dbReference type="SMR" id="A4VPB6"/>
<dbReference type="KEGG" id="psa:PST_3179"/>
<dbReference type="eggNOG" id="COG0796">
    <property type="taxonomic scope" value="Bacteria"/>
</dbReference>
<dbReference type="HOGENOM" id="CLU_052344_1_0_6"/>
<dbReference type="UniPathway" id="UPA00219"/>
<dbReference type="Proteomes" id="UP000000233">
    <property type="component" value="Chromosome"/>
</dbReference>
<dbReference type="GO" id="GO:0008881">
    <property type="term" value="F:glutamate racemase activity"/>
    <property type="evidence" value="ECO:0007669"/>
    <property type="project" value="UniProtKB-UniRule"/>
</dbReference>
<dbReference type="GO" id="GO:0071555">
    <property type="term" value="P:cell wall organization"/>
    <property type="evidence" value="ECO:0007669"/>
    <property type="project" value="UniProtKB-KW"/>
</dbReference>
<dbReference type="GO" id="GO:0009252">
    <property type="term" value="P:peptidoglycan biosynthetic process"/>
    <property type="evidence" value="ECO:0007669"/>
    <property type="project" value="UniProtKB-UniRule"/>
</dbReference>
<dbReference type="GO" id="GO:0008360">
    <property type="term" value="P:regulation of cell shape"/>
    <property type="evidence" value="ECO:0007669"/>
    <property type="project" value="UniProtKB-KW"/>
</dbReference>
<dbReference type="FunFam" id="3.40.50.1860:FF:000001">
    <property type="entry name" value="Glutamate racemase"/>
    <property type="match status" value="1"/>
</dbReference>
<dbReference type="Gene3D" id="3.40.50.1860">
    <property type="match status" value="2"/>
</dbReference>
<dbReference type="HAMAP" id="MF_00258">
    <property type="entry name" value="Glu_racemase"/>
    <property type="match status" value="1"/>
</dbReference>
<dbReference type="InterPro" id="IPR015942">
    <property type="entry name" value="Asp/Glu/hydantoin_racemase"/>
</dbReference>
<dbReference type="InterPro" id="IPR001920">
    <property type="entry name" value="Asp/Glu_race"/>
</dbReference>
<dbReference type="InterPro" id="IPR018187">
    <property type="entry name" value="Asp/Glu_racemase_AS_1"/>
</dbReference>
<dbReference type="InterPro" id="IPR033134">
    <property type="entry name" value="Asp/Glu_racemase_AS_2"/>
</dbReference>
<dbReference type="InterPro" id="IPR004391">
    <property type="entry name" value="Glu_race"/>
</dbReference>
<dbReference type="NCBIfam" id="TIGR00067">
    <property type="entry name" value="glut_race"/>
    <property type="match status" value="1"/>
</dbReference>
<dbReference type="PANTHER" id="PTHR21198">
    <property type="entry name" value="GLUTAMATE RACEMASE"/>
    <property type="match status" value="1"/>
</dbReference>
<dbReference type="PANTHER" id="PTHR21198:SF2">
    <property type="entry name" value="GLUTAMATE RACEMASE"/>
    <property type="match status" value="1"/>
</dbReference>
<dbReference type="Pfam" id="PF01177">
    <property type="entry name" value="Asp_Glu_race"/>
    <property type="match status" value="1"/>
</dbReference>
<dbReference type="SUPFAM" id="SSF53681">
    <property type="entry name" value="Aspartate/glutamate racemase"/>
    <property type="match status" value="2"/>
</dbReference>
<dbReference type="PROSITE" id="PS00923">
    <property type="entry name" value="ASP_GLU_RACEMASE_1"/>
    <property type="match status" value="1"/>
</dbReference>
<dbReference type="PROSITE" id="PS00924">
    <property type="entry name" value="ASP_GLU_RACEMASE_2"/>
    <property type="match status" value="1"/>
</dbReference>
<gene>
    <name evidence="1" type="primary">murI</name>
    <name type="ordered locus">PST_3179</name>
</gene>
<name>MURI_STUS1</name>
<sequence length="264" mass="28582">MADCAAPVGVFDSGVGGLSVLREIRQRLPHESLLYLADSAHVPYGEKSPEYIRERCRVIAAFFVEKGAKALVVACNTATAAGVTELRELYPQLPIIAMEPAVKPAALATRSGVVGVLATTGTLKSAKFAALLDRFAADVRVITQPCPGLVERIEAGDLESADTRAMLMGWVEPMLAQGCDTLILGCTHYPFIRPLLQQLLPNDIRLIDTGAAVARHLREMLAERHLLASGDATQRFYCSGDPQRMARVLPILWGENAVVEFFPS</sequence>
<proteinExistence type="inferred from homology"/>
<organism>
    <name type="scientific">Stutzerimonas stutzeri (strain A1501)</name>
    <name type="common">Pseudomonas stutzeri</name>
    <dbReference type="NCBI Taxonomy" id="379731"/>
    <lineage>
        <taxon>Bacteria</taxon>
        <taxon>Pseudomonadati</taxon>
        <taxon>Pseudomonadota</taxon>
        <taxon>Gammaproteobacteria</taxon>
        <taxon>Pseudomonadales</taxon>
        <taxon>Pseudomonadaceae</taxon>
        <taxon>Stutzerimonas</taxon>
    </lineage>
</organism>